<reference key="1">
    <citation type="journal article" date="2005" name="Science">
        <title>The transcriptional landscape of the mammalian genome.</title>
        <authorList>
            <person name="Carninci P."/>
            <person name="Kasukawa T."/>
            <person name="Katayama S."/>
            <person name="Gough J."/>
            <person name="Frith M.C."/>
            <person name="Maeda N."/>
            <person name="Oyama R."/>
            <person name="Ravasi T."/>
            <person name="Lenhard B."/>
            <person name="Wells C."/>
            <person name="Kodzius R."/>
            <person name="Shimokawa K."/>
            <person name="Bajic V.B."/>
            <person name="Brenner S.E."/>
            <person name="Batalov S."/>
            <person name="Forrest A.R."/>
            <person name="Zavolan M."/>
            <person name="Davis M.J."/>
            <person name="Wilming L.G."/>
            <person name="Aidinis V."/>
            <person name="Allen J.E."/>
            <person name="Ambesi-Impiombato A."/>
            <person name="Apweiler R."/>
            <person name="Aturaliya R.N."/>
            <person name="Bailey T.L."/>
            <person name="Bansal M."/>
            <person name="Baxter L."/>
            <person name="Beisel K.W."/>
            <person name="Bersano T."/>
            <person name="Bono H."/>
            <person name="Chalk A.M."/>
            <person name="Chiu K.P."/>
            <person name="Choudhary V."/>
            <person name="Christoffels A."/>
            <person name="Clutterbuck D.R."/>
            <person name="Crowe M.L."/>
            <person name="Dalla E."/>
            <person name="Dalrymple B.P."/>
            <person name="de Bono B."/>
            <person name="Della Gatta G."/>
            <person name="di Bernardo D."/>
            <person name="Down T."/>
            <person name="Engstrom P."/>
            <person name="Fagiolini M."/>
            <person name="Faulkner G."/>
            <person name="Fletcher C.F."/>
            <person name="Fukushima T."/>
            <person name="Furuno M."/>
            <person name="Futaki S."/>
            <person name="Gariboldi M."/>
            <person name="Georgii-Hemming P."/>
            <person name="Gingeras T.R."/>
            <person name="Gojobori T."/>
            <person name="Green R.E."/>
            <person name="Gustincich S."/>
            <person name="Harbers M."/>
            <person name="Hayashi Y."/>
            <person name="Hensch T.K."/>
            <person name="Hirokawa N."/>
            <person name="Hill D."/>
            <person name="Huminiecki L."/>
            <person name="Iacono M."/>
            <person name="Ikeo K."/>
            <person name="Iwama A."/>
            <person name="Ishikawa T."/>
            <person name="Jakt M."/>
            <person name="Kanapin A."/>
            <person name="Katoh M."/>
            <person name="Kawasawa Y."/>
            <person name="Kelso J."/>
            <person name="Kitamura H."/>
            <person name="Kitano H."/>
            <person name="Kollias G."/>
            <person name="Krishnan S.P."/>
            <person name="Kruger A."/>
            <person name="Kummerfeld S.K."/>
            <person name="Kurochkin I.V."/>
            <person name="Lareau L.F."/>
            <person name="Lazarevic D."/>
            <person name="Lipovich L."/>
            <person name="Liu J."/>
            <person name="Liuni S."/>
            <person name="McWilliam S."/>
            <person name="Madan Babu M."/>
            <person name="Madera M."/>
            <person name="Marchionni L."/>
            <person name="Matsuda H."/>
            <person name="Matsuzawa S."/>
            <person name="Miki H."/>
            <person name="Mignone F."/>
            <person name="Miyake S."/>
            <person name="Morris K."/>
            <person name="Mottagui-Tabar S."/>
            <person name="Mulder N."/>
            <person name="Nakano N."/>
            <person name="Nakauchi H."/>
            <person name="Ng P."/>
            <person name="Nilsson R."/>
            <person name="Nishiguchi S."/>
            <person name="Nishikawa S."/>
            <person name="Nori F."/>
            <person name="Ohara O."/>
            <person name="Okazaki Y."/>
            <person name="Orlando V."/>
            <person name="Pang K.C."/>
            <person name="Pavan W.J."/>
            <person name="Pavesi G."/>
            <person name="Pesole G."/>
            <person name="Petrovsky N."/>
            <person name="Piazza S."/>
            <person name="Reed J."/>
            <person name="Reid J.F."/>
            <person name="Ring B.Z."/>
            <person name="Ringwald M."/>
            <person name="Rost B."/>
            <person name="Ruan Y."/>
            <person name="Salzberg S.L."/>
            <person name="Sandelin A."/>
            <person name="Schneider C."/>
            <person name="Schoenbach C."/>
            <person name="Sekiguchi K."/>
            <person name="Semple C.A."/>
            <person name="Seno S."/>
            <person name="Sessa L."/>
            <person name="Sheng Y."/>
            <person name="Shibata Y."/>
            <person name="Shimada H."/>
            <person name="Shimada K."/>
            <person name="Silva D."/>
            <person name="Sinclair B."/>
            <person name="Sperling S."/>
            <person name="Stupka E."/>
            <person name="Sugiura K."/>
            <person name="Sultana R."/>
            <person name="Takenaka Y."/>
            <person name="Taki K."/>
            <person name="Tammoja K."/>
            <person name="Tan S.L."/>
            <person name="Tang S."/>
            <person name="Taylor M.S."/>
            <person name="Tegner J."/>
            <person name="Teichmann S.A."/>
            <person name="Ueda H.R."/>
            <person name="van Nimwegen E."/>
            <person name="Verardo R."/>
            <person name="Wei C.L."/>
            <person name="Yagi K."/>
            <person name="Yamanishi H."/>
            <person name="Zabarovsky E."/>
            <person name="Zhu S."/>
            <person name="Zimmer A."/>
            <person name="Hide W."/>
            <person name="Bult C."/>
            <person name="Grimmond S.M."/>
            <person name="Teasdale R.D."/>
            <person name="Liu E.T."/>
            <person name="Brusic V."/>
            <person name="Quackenbush J."/>
            <person name="Wahlestedt C."/>
            <person name="Mattick J.S."/>
            <person name="Hume D.A."/>
            <person name="Kai C."/>
            <person name="Sasaki D."/>
            <person name="Tomaru Y."/>
            <person name="Fukuda S."/>
            <person name="Kanamori-Katayama M."/>
            <person name="Suzuki M."/>
            <person name="Aoki J."/>
            <person name="Arakawa T."/>
            <person name="Iida J."/>
            <person name="Imamura K."/>
            <person name="Itoh M."/>
            <person name="Kato T."/>
            <person name="Kawaji H."/>
            <person name="Kawagashira N."/>
            <person name="Kawashima T."/>
            <person name="Kojima M."/>
            <person name="Kondo S."/>
            <person name="Konno H."/>
            <person name="Nakano K."/>
            <person name="Ninomiya N."/>
            <person name="Nishio T."/>
            <person name="Okada M."/>
            <person name="Plessy C."/>
            <person name="Shibata K."/>
            <person name="Shiraki T."/>
            <person name="Suzuki S."/>
            <person name="Tagami M."/>
            <person name="Waki K."/>
            <person name="Watahiki A."/>
            <person name="Okamura-Oho Y."/>
            <person name="Suzuki H."/>
            <person name="Kawai J."/>
            <person name="Hayashizaki Y."/>
        </authorList>
    </citation>
    <scope>NUCLEOTIDE SEQUENCE [LARGE SCALE MRNA]</scope>
    <source>
        <strain>C57BL/6J</strain>
        <tissue>Liver</tissue>
    </source>
</reference>
<reference key="2">
    <citation type="submission" date="1999-12" db="EMBL/GenBank/DDBJ databases">
        <authorList>
            <person name="Fechner H."/>
        </authorList>
    </citation>
    <scope>NUCLEOTIDE SEQUENCE [MRNA] OF 1-271</scope>
    <source>
        <strain>C57BL/6J</strain>
    </source>
</reference>
<reference key="3">
    <citation type="journal article" date="2010" name="Cell">
        <title>A tissue-specific atlas of mouse protein phosphorylation and expression.</title>
        <authorList>
            <person name="Huttlin E.L."/>
            <person name="Jedrychowski M.P."/>
            <person name="Elias J.E."/>
            <person name="Goswami T."/>
            <person name="Rad R."/>
            <person name="Beausoleil S.A."/>
            <person name="Villen J."/>
            <person name="Haas W."/>
            <person name="Sowa M.E."/>
            <person name="Gygi S.P."/>
        </authorList>
    </citation>
    <scope>IDENTIFICATION BY MASS SPECTROMETRY [LARGE SCALE ANALYSIS]</scope>
    <source>
        <tissue>Liver</tissue>
    </source>
</reference>
<reference key="4">
    <citation type="journal article" date="2013" name="Science">
        <title>Impaired alpha-TTP-PIPs interaction underlies familial vitamin E deficiency.</title>
        <authorList>
            <person name="Kono N."/>
            <person name="Ohto U."/>
            <person name="Hiramatsu T."/>
            <person name="Urabe M."/>
            <person name="Uchida Y."/>
            <person name="Satow Y."/>
            <person name="Arai H."/>
        </authorList>
    </citation>
    <scope>X-RAY CRYSTALLOGRAPHY (2.05 ANGSTROMS) OF 21-278 IN COMPLEXES WITH ALPHA-TOCOPHEROL; PHOSPHATIDYLINOSITOL-3,4-BISPHOSPHATE AND PHOSPHATIDYLINOSITOL-4,5-BISPHOSPHATE</scope>
    <scope>FUNCTION</scope>
    <scope>SUBUNIT</scope>
    <scope>MUTAGENESIS OF ARG-59; LYS-217 AND ARG-221</scope>
</reference>
<organism>
    <name type="scientific">Mus musculus</name>
    <name type="common">Mouse</name>
    <dbReference type="NCBI Taxonomy" id="10090"/>
    <lineage>
        <taxon>Eukaryota</taxon>
        <taxon>Metazoa</taxon>
        <taxon>Chordata</taxon>
        <taxon>Craniata</taxon>
        <taxon>Vertebrata</taxon>
        <taxon>Euteleostomi</taxon>
        <taxon>Mammalia</taxon>
        <taxon>Eutheria</taxon>
        <taxon>Euarchontoglires</taxon>
        <taxon>Glires</taxon>
        <taxon>Rodentia</taxon>
        <taxon>Myomorpha</taxon>
        <taxon>Muroidea</taxon>
        <taxon>Muridae</taxon>
        <taxon>Murinae</taxon>
        <taxon>Mus</taxon>
        <taxon>Mus</taxon>
    </lineage>
</organism>
<comment type="function">
    <text evidence="3">Binds (+)-alpha-tocopherol, enhances its transfer between separate membranes, and stimulates its release from liver cells. Binds both phosphatidylinositol 3,4-bisphosphate and phosphatidylinositol 4,5-bisphosphate; the resulting conformation change is important for the release of the bound alpha-tocopherol.</text>
</comment>
<comment type="subunit">
    <text evidence="3">Monomer and homotetramer. Phosphatidylinositol 4,5-bisphosphate binding induces the formation of homotetramers. Phosphatidylinositol 3,4-bisphosphate is less efficient in inducing tetramerization.</text>
</comment>
<comment type="subcellular location">
    <subcellularLocation>
        <location evidence="1">Cytoplasm</location>
    </subcellularLocation>
</comment>
<gene>
    <name type="primary">Ttpa</name>
</gene>
<evidence type="ECO:0000250" key="1"/>
<evidence type="ECO:0000255" key="2">
    <source>
        <dbReference type="PROSITE-ProRule" id="PRU00056"/>
    </source>
</evidence>
<evidence type="ECO:0000269" key="3">
    <source>
    </source>
</evidence>
<evidence type="ECO:0007744" key="4">
    <source>
        <dbReference type="PDB" id="3W67"/>
    </source>
</evidence>
<evidence type="ECO:0007744" key="5">
    <source>
        <dbReference type="PDB" id="3W68"/>
    </source>
</evidence>
<evidence type="ECO:0007829" key="6">
    <source>
        <dbReference type="PDB" id="3W68"/>
    </source>
</evidence>
<sequence length="278" mass="32014">MAEMRPGPLVGKQLNELPDHSPLLQPGLAELRRRVQEAGVPQTPQPLTDAFLLRFLRARDFDLDLAWRLMKNYYKWRAECPELSADLRPRSILGLLKAGYHGVLRSRDSTGSRVLIYRIAYWDPKVFTAYDVFRVSLITSELIVQEVETQRNGVKAIFDLEGWQVSHAFQITPSVAKKIAAVLTDSFPLKVRGIHLINEPVIFHAVFSMIKPFLTEKIKDRIHLHGNNYKSSMLQHFPDILPREYGGKEFSMEDICQEWTNFIMKSEDYLSSISETIQ</sequence>
<proteinExistence type="evidence at protein level"/>
<protein>
    <recommendedName>
        <fullName>Alpha-tocopherol transfer protein</fullName>
        <shortName>Alpha-TTP</shortName>
    </recommendedName>
</protein>
<accession>Q8BWP5</accession>
<accession>Q9CW51</accession>
<accession>Q9JL07</accession>
<dbReference type="EMBL" id="AK004882">
    <property type="protein sequence ID" value="BAB23640.1"/>
    <property type="molecule type" value="mRNA"/>
</dbReference>
<dbReference type="EMBL" id="AK050374">
    <property type="protein sequence ID" value="BAC34218.1"/>
    <property type="molecule type" value="mRNA"/>
</dbReference>
<dbReference type="EMBL" id="AF218416">
    <property type="protein sequence ID" value="AAF25956.1"/>
    <property type="molecule type" value="mRNA"/>
</dbReference>
<dbReference type="CCDS" id="CCDS17995.1"/>
<dbReference type="RefSeq" id="NP_056582.1">
    <property type="nucleotide sequence ID" value="NM_015767.6"/>
</dbReference>
<dbReference type="PDB" id="3W67">
    <property type="method" value="X-ray"/>
    <property type="resolution" value="2.61 A"/>
    <property type="chains" value="A/B/C/D=21-278"/>
</dbReference>
<dbReference type="PDB" id="3W68">
    <property type="method" value="X-ray"/>
    <property type="resolution" value="2.05 A"/>
    <property type="chains" value="A/B/C/D=21-278"/>
</dbReference>
<dbReference type="PDBsum" id="3W67"/>
<dbReference type="PDBsum" id="3W68"/>
<dbReference type="SMR" id="Q8BWP5"/>
<dbReference type="FunCoup" id="Q8BWP5">
    <property type="interactions" value="266"/>
</dbReference>
<dbReference type="STRING" id="10090.ENSMUSP00000095845"/>
<dbReference type="iPTMnet" id="Q8BWP5"/>
<dbReference type="PhosphoSitePlus" id="Q8BWP5"/>
<dbReference type="jPOST" id="Q8BWP5"/>
<dbReference type="PaxDb" id="10090-ENSMUSP00000095845"/>
<dbReference type="ProteomicsDB" id="298025"/>
<dbReference type="Antibodypedia" id="55595">
    <property type="antibodies" value="122 antibodies from 17 providers"/>
</dbReference>
<dbReference type="DNASU" id="50500"/>
<dbReference type="Ensembl" id="ENSMUST00000098244.2">
    <property type="protein sequence ID" value="ENSMUSP00000095845.2"/>
    <property type="gene ID" value="ENSMUSG00000073988.14"/>
</dbReference>
<dbReference type="GeneID" id="50500"/>
<dbReference type="KEGG" id="mmu:50500"/>
<dbReference type="UCSC" id="uc008sci.1">
    <property type="organism name" value="mouse"/>
</dbReference>
<dbReference type="AGR" id="MGI:1354168"/>
<dbReference type="CTD" id="7274"/>
<dbReference type="MGI" id="MGI:1354168">
    <property type="gene designation" value="Ttpa"/>
</dbReference>
<dbReference type="VEuPathDB" id="HostDB:ENSMUSG00000073988"/>
<dbReference type="eggNOG" id="KOG1471">
    <property type="taxonomic scope" value="Eukaryota"/>
</dbReference>
<dbReference type="GeneTree" id="ENSGT00940000159203"/>
<dbReference type="InParanoid" id="Q8BWP5"/>
<dbReference type="OMA" id="KQRVYMH"/>
<dbReference type="OrthoDB" id="440711at2759"/>
<dbReference type="PhylomeDB" id="Q8BWP5"/>
<dbReference type="Reactome" id="R-MMU-8877627">
    <property type="pathway name" value="Vitamin E transport"/>
</dbReference>
<dbReference type="BioGRID-ORCS" id="50500">
    <property type="hits" value="1 hit in 80 CRISPR screens"/>
</dbReference>
<dbReference type="ChiTaRS" id="Ttpa">
    <property type="organism name" value="mouse"/>
</dbReference>
<dbReference type="EvolutionaryTrace" id="Q8BWP5"/>
<dbReference type="PRO" id="PR:Q8BWP5"/>
<dbReference type="Proteomes" id="UP000000589">
    <property type="component" value="Chromosome 4"/>
</dbReference>
<dbReference type="RNAct" id="Q8BWP5">
    <property type="molecule type" value="protein"/>
</dbReference>
<dbReference type="Bgee" id="ENSMUSG00000073988">
    <property type="expression patterns" value="Expressed in left lobe of liver and 137 other cell types or tissues"/>
</dbReference>
<dbReference type="ExpressionAtlas" id="Q8BWP5">
    <property type="expression patterns" value="baseline and differential"/>
</dbReference>
<dbReference type="GO" id="GO:0005737">
    <property type="term" value="C:cytoplasm"/>
    <property type="evidence" value="ECO:0000304"/>
    <property type="project" value="MGI"/>
</dbReference>
<dbReference type="GO" id="GO:0120013">
    <property type="term" value="F:lipid transfer activity"/>
    <property type="evidence" value="ECO:0000314"/>
    <property type="project" value="UniProtKB"/>
</dbReference>
<dbReference type="GO" id="GO:0043325">
    <property type="term" value="F:phosphatidylinositol-3,4-bisphosphate binding"/>
    <property type="evidence" value="ECO:0000314"/>
    <property type="project" value="UniProtKB"/>
</dbReference>
<dbReference type="GO" id="GO:0005546">
    <property type="term" value="F:phosphatidylinositol-4,5-bisphosphate binding"/>
    <property type="evidence" value="ECO:0000314"/>
    <property type="project" value="UniProtKB"/>
</dbReference>
<dbReference type="GO" id="GO:0008431">
    <property type="term" value="F:vitamin E binding"/>
    <property type="evidence" value="ECO:0000314"/>
    <property type="project" value="UniProtKB"/>
</dbReference>
<dbReference type="GO" id="GO:0001892">
    <property type="term" value="P:embryonic placenta development"/>
    <property type="evidence" value="ECO:0000315"/>
    <property type="project" value="MGI"/>
</dbReference>
<dbReference type="GO" id="GO:0120009">
    <property type="term" value="P:intermembrane lipid transfer"/>
    <property type="evidence" value="ECO:0000314"/>
    <property type="project" value="UniProtKB"/>
</dbReference>
<dbReference type="GO" id="GO:0090212">
    <property type="term" value="P:negative regulation of establishment of blood-brain barrier"/>
    <property type="evidence" value="ECO:0000315"/>
    <property type="project" value="BHF-UCL"/>
</dbReference>
<dbReference type="GO" id="GO:0001890">
    <property type="term" value="P:placenta development"/>
    <property type="evidence" value="ECO:0000315"/>
    <property type="project" value="MGI"/>
</dbReference>
<dbReference type="GO" id="GO:1900223">
    <property type="term" value="P:positive regulation of amyloid-beta clearance"/>
    <property type="evidence" value="ECO:0000315"/>
    <property type="project" value="MGI"/>
</dbReference>
<dbReference type="GO" id="GO:0009636">
    <property type="term" value="P:response to toxic substance"/>
    <property type="evidence" value="ECO:0000315"/>
    <property type="project" value="BHF-UCL"/>
</dbReference>
<dbReference type="GO" id="GO:0042360">
    <property type="term" value="P:vitamin E metabolic process"/>
    <property type="evidence" value="ECO:0000315"/>
    <property type="project" value="BHF-UCL"/>
</dbReference>
<dbReference type="GO" id="GO:0051180">
    <property type="term" value="P:vitamin transport"/>
    <property type="evidence" value="ECO:0000314"/>
    <property type="project" value="UniProtKB"/>
</dbReference>
<dbReference type="CDD" id="cd00170">
    <property type="entry name" value="SEC14"/>
    <property type="match status" value="1"/>
</dbReference>
<dbReference type="FunFam" id="1.10.8.20:FF:000003">
    <property type="entry name" value="Alpha-tocopherol transfer protein"/>
    <property type="match status" value="1"/>
</dbReference>
<dbReference type="FunFam" id="3.40.525.10:FF:000002">
    <property type="entry name" value="Alpha-tocopherol transfer protein-like"/>
    <property type="match status" value="1"/>
</dbReference>
<dbReference type="Gene3D" id="1.20.5.1200">
    <property type="entry name" value="Alpha-tocopherol transfer"/>
    <property type="match status" value="1"/>
</dbReference>
<dbReference type="Gene3D" id="3.40.525.10">
    <property type="entry name" value="CRAL-TRIO lipid binding domain"/>
    <property type="match status" value="1"/>
</dbReference>
<dbReference type="Gene3D" id="1.10.8.20">
    <property type="entry name" value="N-terminal domain of phosphatidylinositol transfer protein sec14p"/>
    <property type="match status" value="1"/>
</dbReference>
<dbReference type="InterPro" id="IPR001251">
    <property type="entry name" value="CRAL-TRIO_dom"/>
</dbReference>
<dbReference type="InterPro" id="IPR036865">
    <property type="entry name" value="CRAL-TRIO_dom_sf"/>
</dbReference>
<dbReference type="InterPro" id="IPR011074">
    <property type="entry name" value="CRAL/TRIO_N_dom"/>
</dbReference>
<dbReference type="InterPro" id="IPR036273">
    <property type="entry name" value="CRAL/TRIO_N_dom_sf"/>
</dbReference>
<dbReference type="PANTHER" id="PTHR10174:SF225">
    <property type="entry name" value="ALPHA-TOCOPHEROL TRANSFER PROTEIN"/>
    <property type="match status" value="1"/>
</dbReference>
<dbReference type="PANTHER" id="PTHR10174">
    <property type="entry name" value="ALPHA-TOCOPHEROL TRANSFER PROTEIN-RELATED"/>
    <property type="match status" value="1"/>
</dbReference>
<dbReference type="Pfam" id="PF00650">
    <property type="entry name" value="CRAL_TRIO"/>
    <property type="match status" value="1"/>
</dbReference>
<dbReference type="Pfam" id="PF03765">
    <property type="entry name" value="CRAL_TRIO_N"/>
    <property type="match status" value="1"/>
</dbReference>
<dbReference type="PRINTS" id="PR00180">
    <property type="entry name" value="CRETINALDHBP"/>
</dbReference>
<dbReference type="SMART" id="SM01100">
    <property type="entry name" value="CRAL_TRIO_N"/>
    <property type="match status" value="1"/>
</dbReference>
<dbReference type="SMART" id="SM00516">
    <property type="entry name" value="SEC14"/>
    <property type="match status" value="1"/>
</dbReference>
<dbReference type="SUPFAM" id="SSF52087">
    <property type="entry name" value="CRAL/TRIO domain"/>
    <property type="match status" value="1"/>
</dbReference>
<dbReference type="SUPFAM" id="SSF46938">
    <property type="entry name" value="CRAL/TRIO N-terminal domain"/>
    <property type="match status" value="1"/>
</dbReference>
<dbReference type="PROSITE" id="PS50191">
    <property type="entry name" value="CRAL_TRIO"/>
    <property type="match status" value="1"/>
</dbReference>
<name>TTPA_MOUSE</name>
<keyword id="KW-0002">3D-structure</keyword>
<keyword id="KW-0963">Cytoplasm</keyword>
<keyword id="KW-0446">Lipid-binding</keyword>
<keyword id="KW-1185">Reference proteome</keyword>
<keyword id="KW-0813">Transport</keyword>
<feature type="chain" id="PRO_0000210765" description="Alpha-tocopherol transfer protein">
    <location>
        <begin position="1"/>
        <end position="278"/>
    </location>
</feature>
<feature type="domain" description="CRAL-TRIO" evidence="2">
    <location>
        <begin position="88"/>
        <end position="253"/>
    </location>
</feature>
<feature type="binding site" evidence="3 4">
    <location>
        <position position="185"/>
    </location>
    <ligand>
        <name>a 1,2-diacyl-sn-glycero-3-phospho-(1D-myo-inositol-3,4-bisphosphate)</name>
        <dbReference type="ChEBI" id="CHEBI:57658"/>
    </ligand>
</feature>
<feature type="binding site" evidence="3 5">
    <location>
        <position position="187"/>
    </location>
    <ligand>
        <name>(+)-alpha-tocopherol</name>
        <dbReference type="ChEBI" id="CHEBI:18145"/>
    </ligand>
</feature>
<feature type="binding site" evidence="3 4">
    <location>
        <begin position="190"/>
        <end position="192"/>
    </location>
    <ligand>
        <name>a 1,2-diacyl-sn-glycero-3-phospho-(1D-myo-inositol-3,4-bisphosphate)</name>
        <dbReference type="ChEBI" id="CHEBI:57658"/>
    </ligand>
</feature>
<feature type="binding site" evidence="3 5">
    <location>
        <begin position="208"/>
        <end position="211"/>
    </location>
    <ligand>
        <name>a 1,2-diacyl-sn-glycero-3-phospho-(1D-myo-inositol-4,5-bisphosphate)</name>
        <dbReference type="ChEBI" id="CHEBI:58456"/>
    </ligand>
</feature>
<feature type="binding site" evidence="3 4">
    <location>
        <position position="217"/>
    </location>
    <ligand>
        <name>a 1,2-diacyl-sn-glycero-3-phospho-(1D-myo-inositol-3,4-bisphosphate)</name>
        <dbReference type="ChEBI" id="CHEBI:57658"/>
    </ligand>
</feature>
<feature type="binding site" evidence="3 4">
    <location>
        <position position="221"/>
    </location>
    <ligand>
        <name>a 1,2-diacyl-sn-glycero-3-phospho-(1D-myo-inositol-3,4-bisphosphate)</name>
        <dbReference type="ChEBI" id="CHEBI:57658"/>
    </ligand>
</feature>
<feature type="mutagenesis site" description="Abolishes binding to phosphatidylinositol 3,4-bisphosphate and phosphatidylinositol 4,5-bisphosphate." evidence="3">
    <original>R</original>
    <variation>W</variation>
    <location>
        <position position="59"/>
    </location>
</feature>
<feature type="mutagenesis site" description="Loss of tocopherol secretion (in vivo). No effect on tocopherol binding and intermembrane transfer (in vitro)." evidence="3">
    <original>K</original>
    <variation>A</variation>
    <location>
        <position position="217"/>
    </location>
</feature>
<feature type="mutagenesis site" description="Loss of tocopherol secretion (in vivo). No effect on tocopherol binding and intermembrane transfer (in vitro)." evidence="3">
    <original>R</original>
    <variation>W</variation>
    <location>
        <position position="221"/>
    </location>
</feature>
<feature type="helix" evidence="6">
    <location>
        <begin position="28"/>
        <end position="38"/>
    </location>
</feature>
<feature type="strand" evidence="6">
    <location>
        <begin position="43"/>
        <end position="45"/>
    </location>
</feature>
<feature type="helix" evidence="6">
    <location>
        <begin position="49"/>
        <end position="58"/>
    </location>
</feature>
<feature type="turn" evidence="6">
    <location>
        <begin position="59"/>
        <end position="61"/>
    </location>
</feature>
<feature type="helix" evidence="6">
    <location>
        <begin position="63"/>
        <end position="79"/>
    </location>
</feature>
<feature type="helix" evidence="6">
    <location>
        <begin position="81"/>
        <end position="84"/>
    </location>
</feature>
<feature type="helix" evidence="6">
    <location>
        <begin position="90"/>
        <end position="92"/>
    </location>
</feature>
<feature type="helix" evidence="6">
    <location>
        <begin position="93"/>
        <end position="98"/>
    </location>
</feature>
<feature type="strand" evidence="6">
    <location>
        <begin position="101"/>
        <end position="103"/>
    </location>
</feature>
<feature type="strand" evidence="6">
    <location>
        <begin position="113"/>
        <end position="118"/>
    </location>
</feature>
<feature type="helix" evidence="6">
    <location>
        <begin position="119"/>
        <end position="121"/>
    </location>
</feature>
<feature type="turn" evidence="6">
    <location>
        <begin position="124"/>
        <end position="126"/>
    </location>
</feature>
<feature type="helix" evidence="6">
    <location>
        <begin position="129"/>
        <end position="143"/>
    </location>
</feature>
<feature type="helix" evidence="6">
    <location>
        <begin position="147"/>
        <end position="152"/>
    </location>
</feature>
<feature type="strand" evidence="6">
    <location>
        <begin position="154"/>
        <end position="159"/>
    </location>
</feature>
<feature type="helix" evidence="6">
    <location>
        <begin position="165"/>
        <end position="169"/>
    </location>
</feature>
<feature type="helix" evidence="6">
    <location>
        <begin position="173"/>
        <end position="183"/>
    </location>
</feature>
<feature type="strand" evidence="6">
    <location>
        <begin position="186"/>
        <end position="189"/>
    </location>
</feature>
<feature type="strand" evidence="6">
    <location>
        <begin position="191"/>
        <end position="198"/>
    </location>
</feature>
<feature type="helix" evidence="6">
    <location>
        <begin position="202"/>
        <end position="210"/>
    </location>
</feature>
<feature type="helix" evidence="6">
    <location>
        <begin position="211"/>
        <end position="213"/>
    </location>
</feature>
<feature type="helix" evidence="6">
    <location>
        <begin position="216"/>
        <end position="219"/>
    </location>
</feature>
<feature type="strand" evidence="6">
    <location>
        <begin position="222"/>
        <end position="224"/>
    </location>
</feature>
<feature type="helix" evidence="6">
    <location>
        <begin position="230"/>
        <end position="236"/>
    </location>
</feature>
<feature type="turn" evidence="6">
    <location>
        <begin position="238"/>
        <end position="240"/>
    </location>
</feature>
<feature type="helix" evidence="6">
    <location>
        <begin position="243"/>
        <end position="245"/>
    </location>
</feature>
<feature type="helix" evidence="6">
    <location>
        <begin position="252"/>
        <end position="265"/>
    </location>
</feature>
<feature type="helix" evidence="6">
    <location>
        <begin position="267"/>
        <end position="272"/>
    </location>
</feature>